<reference key="1">
    <citation type="journal article" date="2001" name="Nature">
        <title>Genome sequence of Yersinia pestis, the causative agent of plague.</title>
        <authorList>
            <person name="Parkhill J."/>
            <person name="Wren B.W."/>
            <person name="Thomson N.R."/>
            <person name="Titball R.W."/>
            <person name="Holden M.T.G."/>
            <person name="Prentice M.B."/>
            <person name="Sebaihia M."/>
            <person name="James K.D."/>
            <person name="Churcher C.M."/>
            <person name="Mungall K.L."/>
            <person name="Baker S."/>
            <person name="Basham D."/>
            <person name="Bentley S.D."/>
            <person name="Brooks K."/>
            <person name="Cerdeno-Tarraga A.-M."/>
            <person name="Chillingworth T."/>
            <person name="Cronin A."/>
            <person name="Davies R.M."/>
            <person name="Davis P."/>
            <person name="Dougan G."/>
            <person name="Feltwell T."/>
            <person name="Hamlin N."/>
            <person name="Holroyd S."/>
            <person name="Jagels K."/>
            <person name="Karlyshev A.V."/>
            <person name="Leather S."/>
            <person name="Moule S."/>
            <person name="Oyston P.C.F."/>
            <person name="Quail M.A."/>
            <person name="Rutherford K.M."/>
            <person name="Simmonds M."/>
            <person name="Skelton J."/>
            <person name="Stevens K."/>
            <person name="Whitehead S."/>
            <person name="Barrell B.G."/>
        </authorList>
    </citation>
    <scope>NUCLEOTIDE SEQUENCE [LARGE SCALE GENOMIC DNA]</scope>
    <source>
        <strain>CO-92 / Biovar Orientalis</strain>
    </source>
</reference>
<reference key="2">
    <citation type="journal article" date="2002" name="J. Bacteriol.">
        <title>Genome sequence of Yersinia pestis KIM.</title>
        <authorList>
            <person name="Deng W."/>
            <person name="Burland V."/>
            <person name="Plunkett G. III"/>
            <person name="Boutin A."/>
            <person name="Mayhew G.F."/>
            <person name="Liss P."/>
            <person name="Perna N.T."/>
            <person name="Rose D.J."/>
            <person name="Mau B."/>
            <person name="Zhou S."/>
            <person name="Schwartz D.C."/>
            <person name="Fetherston J.D."/>
            <person name="Lindler L.E."/>
            <person name="Brubaker R.R."/>
            <person name="Plano G.V."/>
            <person name="Straley S.C."/>
            <person name="McDonough K.A."/>
            <person name="Nilles M.L."/>
            <person name="Matson J.S."/>
            <person name="Blattner F.R."/>
            <person name="Perry R.D."/>
        </authorList>
    </citation>
    <scope>NUCLEOTIDE SEQUENCE [LARGE SCALE GENOMIC DNA]</scope>
    <source>
        <strain>KIM10+ / Biovar Mediaevalis</strain>
    </source>
</reference>
<reference key="3">
    <citation type="journal article" date="2004" name="DNA Res.">
        <title>Complete genome sequence of Yersinia pestis strain 91001, an isolate avirulent to humans.</title>
        <authorList>
            <person name="Song Y."/>
            <person name="Tong Z."/>
            <person name="Wang J."/>
            <person name="Wang L."/>
            <person name="Guo Z."/>
            <person name="Han Y."/>
            <person name="Zhang J."/>
            <person name="Pei D."/>
            <person name="Zhou D."/>
            <person name="Qin H."/>
            <person name="Pang X."/>
            <person name="Han Y."/>
            <person name="Zhai J."/>
            <person name="Li M."/>
            <person name="Cui B."/>
            <person name="Qi Z."/>
            <person name="Jin L."/>
            <person name="Dai R."/>
            <person name="Chen F."/>
            <person name="Li S."/>
            <person name="Ye C."/>
            <person name="Du Z."/>
            <person name="Lin W."/>
            <person name="Wang J."/>
            <person name="Yu J."/>
            <person name="Yang H."/>
            <person name="Wang J."/>
            <person name="Huang P."/>
            <person name="Yang R."/>
        </authorList>
    </citation>
    <scope>NUCLEOTIDE SEQUENCE [LARGE SCALE GENOMIC DNA]</scope>
    <source>
        <strain>91001 / Biovar Mediaevalis</strain>
    </source>
</reference>
<protein>
    <recommendedName>
        <fullName evidence="1">Protein Syd</fullName>
    </recommendedName>
</protein>
<name>SYDP_YERPE</name>
<proteinExistence type="inferred from homology"/>
<feature type="chain" id="PRO_0000214151" description="Protein Syd">
    <location>
        <begin position="1"/>
        <end position="183"/>
    </location>
</feature>
<accession>Q8CZY7</accession>
<accession>Q0WI10</accession>
<accession>Q8ZH74</accession>
<evidence type="ECO:0000255" key="1">
    <source>
        <dbReference type="HAMAP-Rule" id="MF_01104"/>
    </source>
</evidence>
<evidence type="ECO:0000305" key="2"/>
<dbReference type="EMBL" id="AL590842">
    <property type="protein sequence ID" value="CAL19700.1"/>
    <property type="status" value="ALT_INIT"/>
    <property type="molecule type" value="Genomic_DNA"/>
</dbReference>
<dbReference type="EMBL" id="AE009952">
    <property type="protein sequence ID" value="AAM86696.1"/>
    <property type="molecule type" value="Genomic_DNA"/>
</dbReference>
<dbReference type="EMBL" id="AE017042">
    <property type="protein sequence ID" value="AAS63000.1"/>
    <property type="molecule type" value="Genomic_DNA"/>
</dbReference>
<dbReference type="PIR" id="AB0127">
    <property type="entry name" value="AB0127"/>
</dbReference>
<dbReference type="RefSeq" id="WP_002212123.1">
    <property type="nucleotide sequence ID" value="NZ_WUCM01000143.1"/>
</dbReference>
<dbReference type="RefSeq" id="YP_002346078.1">
    <property type="nucleotide sequence ID" value="NC_003143.1"/>
</dbReference>
<dbReference type="SMR" id="Q8CZY7"/>
<dbReference type="IntAct" id="Q8CZY7">
    <property type="interactions" value="7"/>
</dbReference>
<dbReference type="STRING" id="214092.YPO1035"/>
<dbReference type="PaxDb" id="214092-YPO1035"/>
<dbReference type="DNASU" id="1148093"/>
<dbReference type="EnsemblBacteria" id="AAS63000">
    <property type="protein sequence ID" value="AAS63000"/>
    <property type="gene ID" value="YP_2816"/>
</dbReference>
<dbReference type="GeneID" id="57977526"/>
<dbReference type="KEGG" id="ype:YPO1035"/>
<dbReference type="KEGG" id="ypk:y3146"/>
<dbReference type="KEGG" id="ypm:YP_2816"/>
<dbReference type="PATRIC" id="fig|214092.21.peg.1323"/>
<dbReference type="eggNOG" id="ENOG502ZCMR">
    <property type="taxonomic scope" value="Bacteria"/>
</dbReference>
<dbReference type="HOGENOM" id="CLU_121866_0_0_6"/>
<dbReference type="OMA" id="WIEIPGE"/>
<dbReference type="Proteomes" id="UP000000815">
    <property type="component" value="Chromosome"/>
</dbReference>
<dbReference type="Proteomes" id="UP000001019">
    <property type="component" value="Chromosome"/>
</dbReference>
<dbReference type="Proteomes" id="UP000002490">
    <property type="component" value="Chromosome"/>
</dbReference>
<dbReference type="GO" id="GO:0009898">
    <property type="term" value="C:cytoplasmic side of plasma membrane"/>
    <property type="evidence" value="ECO:0007669"/>
    <property type="project" value="InterPro"/>
</dbReference>
<dbReference type="CDD" id="cd16323">
    <property type="entry name" value="Syd"/>
    <property type="match status" value="1"/>
</dbReference>
<dbReference type="Gene3D" id="3.40.1580.20">
    <property type="entry name" value="Syd protein"/>
    <property type="match status" value="1"/>
</dbReference>
<dbReference type="HAMAP" id="MF_01104">
    <property type="entry name" value="Syd"/>
    <property type="match status" value="1"/>
</dbReference>
<dbReference type="InterPro" id="IPR009948">
    <property type="entry name" value="Syd"/>
</dbReference>
<dbReference type="InterPro" id="IPR038228">
    <property type="entry name" value="Syd_sf"/>
</dbReference>
<dbReference type="NCBIfam" id="NF003439">
    <property type="entry name" value="PRK04968.1"/>
    <property type="match status" value="1"/>
</dbReference>
<dbReference type="Pfam" id="PF07348">
    <property type="entry name" value="Syd"/>
    <property type="match status" value="1"/>
</dbReference>
<comment type="function">
    <text evidence="1">Interacts with the SecY protein in vivo. May bind preferentially to an uncomplexed state of SecY, thus functioning either as a chelating agent for excess SecY in the cell or as a regulatory factor that negatively controls the translocase function.</text>
</comment>
<comment type="subcellular location">
    <subcellularLocation>
        <location evidence="1">Cell inner membrane</location>
        <topology evidence="1">Peripheral membrane protein</topology>
        <orientation evidence="1">Cytoplasmic side</orientation>
    </subcellularLocation>
    <text evidence="1">Loosely associated with the cytoplasmic side of the inner membrane, probably via SecY.</text>
</comment>
<comment type="similarity">
    <text evidence="1">Belongs to the Syd family.</text>
</comment>
<comment type="sequence caution" evidence="2">
    <conflict type="erroneous initiation">
        <sequence resource="EMBL-CDS" id="CAL19700"/>
    </conflict>
</comment>
<keyword id="KW-0997">Cell inner membrane</keyword>
<keyword id="KW-1003">Cell membrane</keyword>
<keyword id="KW-0472">Membrane</keyword>
<keyword id="KW-1185">Reference proteome</keyword>
<sequence>MDLNISTALRSFTQRYIDLWQQQTGHLPASKELYGVPSPCIVETGEDQVFWQPQAFLPEATLTNIERALEIQLHPDIHDFYTQQYAGDMMADLGNHRFTLLQVWSEDDFIRLQENLIGHLVTQKRLKLSPTLFLATTSSEMTMASLCNVSGNVVLEQFGSDKRTLLASTLSHFLDALRPVLPE</sequence>
<gene>
    <name evidence="1" type="primary">syd</name>
    <name type="ordered locus">YPO1035</name>
    <name type="ordered locus">y3146</name>
    <name type="ordered locus">YP_2816</name>
</gene>
<organism>
    <name type="scientific">Yersinia pestis</name>
    <dbReference type="NCBI Taxonomy" id="632"/>
    <lineage>
        <taxon>Bacteria</taxon>
        <taxon>Pseudomonadati</taxon>
        <taxon>Pseudomonadota</taxon>
        <taxon>Gammaproteobacteria</taxon>
        <taxon>Enterobacterales</taxon>
        <taxon>Yersiniaceae</taxon>
        <taxon>Yersinia</taxon>
    </lineage>
</organism>